<gene>
    <name type="primary">kstR2</name>
    <name type="ordered locus">Rv3557c</name>
</gene>
<name>KSTR2_MYCTU</name>
<sequence>MDRVAGQVNSRRGELLELAAAMFAERGLRATTVRDIADGAGILSGSLYHHFASKEEMVDELLRGFLDWLFARYRDIVDSTANPLERLQGLFMASFEAIEHHHAQVVIYQDEAQRLASQPRFSYIEDRNKQQRKMWVDVLNQGIEEGYFRPDLDVDLVYRFIRDTTWVSVRWYRPGGPLTAQQVGQQYLAIVLGGITKEGV</sequence>
<dbReference type="EMBL" id="AL123456">
    <property type="protein sequence ID" value="CCP46379.1"/>
    <property type="molecule type" value="Genomic_DNA"/>
</dbReference>
<dbReference type="PIR" id="C70604">
    <property type="entry name" value="C70604"/>
</dbReference>
<dbReference type="RefSeq" id="NP_218074.1">
    <property type="nucleotide sequence ID" value="NC_000962.3"/>
</dbReference>
<dbReference type="RefSeq" id="WP_003419329.1">
    <property type="nucleotide sequence ID" value="NZ_NVQJ01000014.1"/>
</dbReference>
<dbReference type="PDB" id="4W1U">
    <property type="method" value="X-ray"/>
    <property type="resolution" value="1.88 A"/>
    <property type="chains" value="A=1-200"/>
</dbReference>
<dbReference type="PDB" id="4W97">
    <property type="method" value="X-ray"/>
    <property type="resolution" value="1.60 A"/>
    <property type="chains" value="A=2-200"/>
</dbReference>
<dbReference type="PDBsum" id="4W1U"/>
<dbReference type="PDBsum" id="4W97"/>
<dbReference type="SMR" id="P9WMB9"/>
<dbReference type="FunCoup" id="P9WMB9">
    <property type="interactions" value="2"/>
</dbReference>
<dbReference type="STRING" id="83332.Rv3557c"/>
<dbReference type="PaxDb" id="83332-Rv3557c"/>
<dbReference type="DNASU" id="887467"/>
<dbReference type="GeneID" id="45427541"/>
<dbReference type="GeneID" id="887467"/>
<dbReference type="KEGG" id="mtu:Rv3557c"/>
<dbReference type="KEGG" id="mtv:RVBD_3557c"/>
<dbReference type="TubercuList" id="Rv3557c"/>
<dbReference type="eggNOG" id="COG1309">
    <property type="taxonomic scope" value="Bacteria"/>
</dbReference>
<dbReference type="InParanoid" id="P9WMB9"/>
<dbReference type="OrthoDB" id="9814200at2"/>
<dbReference type="PhylomeDB" id="P9WMB9"/>
<dbReference type="EvolutionaryTrace" id="P9WMB9"/>
<dbReference type="Proteomes" id="UP000001584">
    <property type="component" value="Chromosome"/>
</dbReference>
<dbReference type="GO" id="GO:0003677">
    <property type="term" value="F:DNA binding"/>
    <property type="evidence" value="ECO:0000315"/>
    <property type="project" value="UniProtKB"/>
</dbReference>
<dbReference type="GO" id="GO:0003700">
    <property type="term" value="F:DNA-binding transcription factor activity"/>
    <property type="evidence" value="ECO:0000318"/>
    <property type="project" value="GO_Central"/>
</dbReference>
<dbReference type="GO" id="GO:0000976">
    <property type="term" value="F:transcription cis-regulatory region binding"/>
    <property type="evidence" value="ECO:0000318"/>
    <property type="project" value="GO_Central"/>
</dbReference>
<dbReference type="GO" id="GO:0006355">
    <property type="term" value="P:regulation of DNA-templated transcription"/>
    <property type="evidence" value="ECO:0000315"/>
    <property type="project" value="UniProtKB"/>
</dbReference>
<dbReference type="FunFam" id="1.10.10.60:FF:000289">
    <property type="entry name" value="TetR family transcriptional regulator"/>
    <property type="match status" value="1"/>
</dbReference>
<dbReference type="FunFam" id="1.10.357.10:FF:000020">
    <property type="entry name" value="TetR family transcriptional regulator"/>
    <property type="match status" value="1"/>
</dbReference>
<dbReference type="Gene3D" id="1.10.10.60">
    <property type="entry name" value="Homeodomain-like"/>
    <property type="match status" value="1"/>
</dbReference>
<dbReference type="Gene3D" id="1.10.357.10">
    <property type="entry name" value="Tetracycline Repressor, domain 2"/>
    <property type="match status" value="1"/>
</dbReference>
<dbReference type="InterPro" id="IPR009057">
    <property type="entry name" value="Homeodomain-like_sf"/>
</dbReference>
<dbReference type="InterPro" id="IPR050109">
    <property type="entry name" value="HTH-type_TetR-like_transc_reg"/>
</dbReference>
<dbReference type="InterPro" id="IPR001647">
    <property type="entry name" value="HTH_TetR"/>
</dbReference>
<dbReference type="InterPro" id="IPR041490">
    <property type="entry name" value="KstR2_TetR_C"/>
</dbReference>
<dbReference type="InterPro" id="IPR036271">
    <property type="entry name" value="Tet_transcr_reg_TetR-rel_C_sf"/>
</dbReference>
<dbReference type="PANTHER" id="PTHR30055">
    <property type="entry name" value="HTH-TYPE TRANSCRIPTIONAL REGULATOR RUTR"/>
    <property type="match status" value="1"/>
</dbReference>
<dbReference type="PANTHER" id="PTHR30055:SF175">
    <property type="entry name" value="HTH-TYPE TRANSCRIPTIONAL REPRESSOR KSTR2"/>
    <property type="match status" value="1"/>
</dbReference>
<dbReference type="Pfam" id="PF17932">
    <property type="entry name" value="TetR_C_24"/>
    <property type="match status" value="1"/>
</dbReference>
<dbReference type="Pfam" id="PF00440">
    <property type="entry name" value="TetR_N"/>
    <property type="match status" value="1"/>
</dbReference>
<dbReference type="PRINTS" id="PR00455">
    <property type="entry name" value="HTHTETR"/>
</dbReference>
<dbReference type="SUPFAM" id="SSF46689">
    <property type="entry name" value="Homeodomain-like"/>
    <property type="match status" value="1"/>
</dbReference>
<dbReference type="SUPFAM" id="SSF48498">
    <property type="entry name" value="Tetracyclin repressor-like, C-terminal domain"/>
    <property type="match status" value="1"/>
</dbReference>
<dbReference type="PROSITE" id="PS50977">
    <property type="entry name" value="HTH_TETR_2"/>
    <property type="match status" value="1"/>
</dbReference>
<keyword id="KW-0002">3D-structure</keyword>
<keyword id="KW-0238">DNA-binding</keyword>
<keyword id="KW-1185">Reference proteome</keyword>
<keyword id="KW-0678">Repressor</keyword>
<keyword id="KW-0804">Transcription</keyword>
<keyword id="KW-0805">Transcription regulation</keyword>
<comment type="function">
    <text evidence="3">Controls the expression of a small regulon that may play a role in the utilization of cholesterol.</text>
</comment>
<comment type="subunit">
    <text evidence="1">Homodimer.</text>
</comment>
<feature type="chain" id="PRO_0000405031" description="HTH-type transcriptional repressor KstR2">
    <location>
        <begin position="1"/>
        <end position="200"/>
    </location>
</feature>
<feature type="domain" description="HTH tetR-type" evidence="2">
    <location>
        <begin position="9"/>
        <end position="69"/>
    </location>
</feature>
<feature type="DNA-binding region" description="H-T-H motif" evidence="2">
    <location>
        <begin position="32"/>
        <end position="51"/>
    </location>
</feature>
<feature type="helix" evidence="5">
    <location>
        <begin position="11"/>
        <end position="26"/>
    </location>
</feature>
<feature type="turn" evidence="4">
    <location>
        <begin position="28"/>
        <end position="30"/>
    </location>
</feature>
<feature type="helix" evidence="5">
    <location>
        <begin position="33"/>
        <end position="40"/>
    </location>
</feature>
<feature type="helix" evidence="5">
    <location>
        <begin position="44"/>
        <end position="47"/>
    </location>
</feature>
<feature type="turn" evidence="5">
    <location>
        <begin position="48"/>
        <end position="50"/>
    </location>
</feature>
<feature type="helix" evidence="5">
    <location>
        <begin position="54"/>
        <end position="79"/>
    </location>
</feature>
<feature type="helix" evidence="5">
    <location>
        <begin position="83"/>
        <end position="100"/>
    </location>
</feature>
<feature type="helix" evidence="5">
    <location>
        <begin position="102"/>
        <end position="115"/>
    </location>
</feature>
<feature type="helix" evidence="5">
    <location>
        <begin position="119"/>
        <end position="121"/>
    </location>
</feature>
<feature type="helix" evidence="5">
    <location>
        <begin position="123"/>
        <end position="144"/>
    </location>
</feature>
<feature type="helix" evidence="5">
    <location>
        <begin position="154"/>
        <end position="166"/>
    </location>
</feature>
<feature type="helix" evidence="5">
    <location>
        <begin position="167"/>
        <end position="170"/>
    </location>
</feature>
<feature type="strand" evidence="5">
    <location>
        <begin position="176"/>
        <end position="178"/>
    </location>
</feature>
<feature type="helix" evidence="5">
    <location>
        <begin position="180"/>
        <end position="195"/>
    </location>
</feature>
<protein>
    <recommendedName>
        <fullName>HTH-type transcriptional repressor KstR2</fullName>
    </recommendedName>
</protein>
<reference key="1">
    <citation type="journal article" date="1998" name="Nature">
        <title>Deciphering the biology of Mycobacterium tuberculosis from the complete genome sequence.</title>
        <authorList>
            <person name="Cole S.T."/>
            <person name="Brosch R."/>
            <person name="Parkhill J."/>
            <person name="Garnier T."/>
            <person name="Churcher C.M."/>
            <person name="Harris D.E."/>
            <person name="Gordon S.V."/>
            <person name="Eiglmeier K."/>
            <person name="Gas S."/>
            <person name="Barry C.E. III"/>
            <person name="Tekaia F."/>
            <person name="Badcock K."/>
            <person name="Basham D."/>
            <person name="Brown D."/>
            <person name="Chillingworth T."/>
            <person name="Connor R."/>
            <person name="Davies R.M."/>
            <person name="Devlin K."/>
            <person name="Feltwell T."/>
            <person name="Gentles S."/>
            <person name="Hamlin N."/>
            <person name="Holroyd S."/>
            <person name="Hornsby T."/>
            <person name="Jagels K."/>
            <person name="Krogh A."/>
            <person name="McLean J."/>
            <person name="Moule S."/>
            <person name="Murphy L.D."/>
            <person name="Oliver S."/>
            <person name="Osborne J."/>
            <person name="Quail M.A."/>
            <person name="Rajandream M.A."/>
            <person name="Rogers J."/>
            <person name="Rutter S."/>
            <person name="Seeger K."/>
            <person name="Skelton S."/>
            <person name="Squares S."/>
            <person name="Squares R."/>
            <person name="Sulston J.E."/>
            <person name="Taylor K."/>
            <person name="Whitehead S."/>
            <person name="Barrell B.G."/>
        </authorList>
    </citation>
    <scope>NUCLEOTIDE SEQUENCE [LARGE SCALE GENOMIC DNA]</scope>
    <source>
        <strain>ATCC 25618 / H37Rv</strain>
    </source>
</reference>
<reference key="2">
    <citation type="journal article" date="2010" name="Microbiology">
        <title>Cholesterol utilization in mycobacteria is controlled by two TetR-type transcriptional regulators: kstR and kstR2.</title>
        <authorList>
            <person name="Kendall S.L."/>
            <person name="Burgess P."/>
            <person name="Balhana R."/>
            <person name="Withers M."/>
            <person name="Ten Bokum A."/>
            <person name="Lott J.S."/>
            <person name="Gao C."/>
            <person name="Uhia-Castro I."/>
            <person name="Stoker N.G."/>
        </authorList>
    </citation>
    <scope>FUNCTION AS A TRANSCRIPTIONAL REGULATOR</scope>
    <source>
        <strain>ATCC 25618 / H37Rv</strain>
    </source>
</reference>
<reference key="3">
    <citation type="journal article" date="2011" name="Mol. Cell. Proteomics">
        <title>Proteogenomic analysis of Mycobacterium tuberculosis by high resolution mass spectrometry.</title>
        <authorList>
            <person name="Kelkar D.S."/>
            <person name="Kumar D."/>
            <person name="Kumar P."/>
            <person name="Balakrishnan L."/>
            <person name="Muthusamy B."/>
            <person name="Yadav A.K."/>
            <person name="Shrivastava P."/>
            <person name="Marimuthu A."/>
            <person name="Anand S."/>
            <person name="Sundaram H."/>
            <person name="Kingsbury R."/>
            <person name="Harsha H.C."/>
            <person name="Nair B."/>
            <person name="Prasad T.S."/>
            <person name="Chauhan D.S."/>
            <person name="Katoch K."/>
            <person name="Katoch V.M."/>
            <person name="Kumar P."/>
            <person name="Chaerkady R."/>
            <person name="Ramachandran S."/>
            <person name="Dash D."/>
            <person name="Pandey A."/>
        </authorList>
    </citation>
    <scope>IDENTIFICATION BY MASS SPECTROMETRY [LARGE SCALE ANALYSIS]</scope>
    <source>
        <strain>ATCC 25618 / H37Rv</strain>
    </source>
</reference>
<organism>
    <name type="scientific">Mycobacterium tuberculosis (strain ATCC 25618 / H37Rv)</name>
    <dbReference type="NCBI Taxonomy" id="83332"/>
    <lineage>
        <taxon>Bacteria</taxon>
        <taxon>Bacillati</taxon>
        <taxon>Actinomycetota</taxon>
        <taxon>Actinomycetes</taxon>
        <taxon>Mycobacteriales</taxon>
        <taxon>Mycobacteriaceae</taxon>
        <taxon>Mycobacterium</taxon>
        <taxon>Mycobacterium tuberculosis complex</taxon>
    </lineage>
</organism>
<evidence type="ECO:0000250" key="1"/>
<evidence type="ECO:0000255" key="2">
    <source>
        <dbReference type="PROSITE-ProRule" id="PRU00335"/>
    </source>
</evidence>
<evidence type="ECO:0000269" key="3">
    <source>
    </source>
</evidence>
<evidence type="ECO:0007829" key="4">
    <source>
        <dbReference type="PDB" id="4W1U"/>
    </source>
</evidence>
<evidence type="ECO:0007829" key="5">
    <source>
        <dbReference type="PDB" id="4W97"/>
    </source>
</evidence>
<proteinExistence type="evidence at protein level"/>
<accession>P9WMB9</accession>
<accession>L0TD56</accession>
<accession>P96839</accession>
<accession>Q7D5A5</accession>